<keyword id="KW-0028">Amino-acid biosynthesis</keyword>
<keyword id="KW-0057">Aromatic amino acid biosynthesis</keyword>
<keyword id="KW-0963">Cytoplasm</keyword>
<keyword id="KW-0808">Transferase</keyword>
<feature type="chain" id="PRO_1000012437" description="3-phosphoshikimate 1-carboxyvinyltransferase">
    <location>
        <begin position="1"/>
        <end position="432"/>
    </location>
</feature>
<feature type="active site" description="Proton acceptor" evidence="1">
    <location>
        <position position="316"/>
    </location>
</feature>
<feature type="binding site" evidence="1">
    <location>
        <position position="22"/>
    </location>
    <ligand>
        <name>3-phosphoshikimate</name>
        <dbReference type="ChEBI" id="CHEBI:145989"/>
    </ligand>
</feature>
<feature type="binding site" evidence="1">
    <location>
        <position position="22"/>
    </location>
    <ligand>
        <name>phosphoenolpyruvate</name>
        <dbReference type="ChEBI" id="CHEBI:58702"/>
    </ligand>
</feature>
<feature type="binding site" evidence="1">
    <location>
        <position position="23"/>
    </location>
    <ligand>
        <name>3-phosphoshikimate</name>
        <dbReference type="ChEBI" id="CHEBI:145989"/>
    </ligand>
</feature>
<feature type="binding site" evidence="1">
    <location>
        <position position="27"/>
    </location>
    <ligand>
        <name>3-phosphoshikimate</name>
        <dbReference type="ChEBI" id="CHEBI:145989"/>
    </ligand>
</feature>
<feature type="binding site" evidence="1">
    <location>
        <position position="96"/>
    </location>
    <ligand>
        <name>phosphoenolpyruvate</name>
        <dbReference type="ChEBI" id="CHEBI:58702"/>
    </ligand>
</feature>
<feature type="binding site" evidence="1">
    <location>
        <position position="127"/>
    </location>
    <ligand>
        <name>phosphoenolpyruvate</name>
        <dbReference type="ChEBI" id="CHEBI:58702"/>
    </ligand>
</feature>
<feature type="binding site" evidence="1">
    <location>
        <position position="173"/>
    </location>
    <ligand>
        <name>3-phosphoshikimate</name>
        <dbReference type="ChEBI" id="CHEBI:145989"/>
    </ligand>
</feature>
<feature type="binding site" evidence="1">
    <location>
        <position position="174"/>
    </location>
    <ligand>
        <name>3-phosphoshikimate</name>
        <dbReference type="ChEBI" id="CHEBI:145989"/>
    </ligand>
</feature>
<feature type="binding site" evidence="1">
    <location>
        <position position="175"/>
    </location>
    <ligand>
        <name>3-phosphoshikimate</name>
        <dbReference type="ChEBI" id="CHEBI:145989"/>
    </ligand>
</feature>
<feature type="binding site" evidence="1">
    <location>
        <position position="175"/>
    </location>
    <ligand>
        <name>phosphoenolpyruvate</name>
        <dbReference type="ChEBI" id="CHEBI:58702"/>
    </ligand>
</feature>
<feature type="binding site" evidence="1">
    <location>
        <position position="201"/>
    </location>
    <ligand>
        <name>3-phosphoshikimate</name>
        <dbReference type="ChEBI" id="CHEBI:145989"/>
    </ligand>
</feature>
<feature type="binding site" evidence="1">
    <location>
        <position position="316"/>
    </location>
    <ligand>
        <name>3-phosphoshikimate</name>
        <dbReference type="ChEBI" id="CHEBI:145989"/>
    </ligand>
</feature>
<feature type="binding site" evidence="1">
    <location>
        <position position="339"/>
    </location>
    <ligand>
        <name>3-phosphoshikimate</name>
        <dbReference type="ChEBI" id="CHEBI:145989"/>
    </ligand>
</feature>
<feature type="binding site" evidence="1">
    <location>
        <position position="343"/>
    </location>
    <ligand>
        <name>3-phosphoshikimate</name>
        <dbReference type="ChEBI" id="CHEBI:145989"/>
    </ligand>
</feature>
<feature type="binding site" evidence="1">
    <location>
        <position position="347"/>
    </location>
    <ligand>
        <name>phosphoenolpyruvate</name>
        <dbReference type="ChEBI" id="CHEBI:58702"/>
    </ligand>
</feature>
<feature type="binding site" evidence="1">
    <location>
        <position position="391"/>
    </location>
    <ligand>
        <name>phosphoenolpyruvate</name>
        <dbReference type="ChEBI" id="CHEBI:58702"/>
    </ligand>
</feature>
<feature type="binding site" evidence="1">
    <location>
        <position position="416"/>
    </location>
    <ligand>
        <name>phosphoenolpyruvate</name>
        <dbReference type="ChEBI" id="CHEBI:58702"/>
    </ligand>
</feature>
<organism>
    <name type="scientific">Haemophilus influenzae (strain 86-028NP)</name>
    <dbReference type="NCBI Taxonomy" id="281310"/>
    <lineage>
        <taxon>Bacteria</taxon>
        <taxon>Pseudomonadati</taxon>
        <taxon>Pseudomonadota</taxon>
        <taxon>Gammaproteobacteria</taxon>
        <taxon>Pasteurellales</taxon>
        <taxon>Pasteurellaceae</taxon>
        <taxon>Haemophilus</taxon>
    </lineage>
</organism>
<comment type="function">
    <text evidence="1">Catalyzes the transfer of the enolpyruvyl moiety of phosphoenolpyruvate (PEP) to the 5-hydroxyl of shikimate-3-phosphate (S3P) to produce enolpyruvyl shikimate-3-phosphate and inorganic phosphate.</text>
</comment>
<comment type="catalytic activity">
    <reaction evidence="1">
        <text>3-phosphoshikimate + phosphoenolpyruvate = 5-O-(1-carboxyvinyl)-3-phosphoshikimate + phosphate</text>
        <dbReference type="Rhea" id="RHEA:21256"/>
        <dbReference type="ChEBI" id="CHEBI:43474"/>
        <dbReference type="ChEBI" id="CHEBI:57701"/>
        <dbReference type="ChEBI" id="CHEBI:58702"/>
        <dbReference type="ChEBI" id="CHEBI:145989"/>
        <dbReference type="EC" id="2.5.1.19"/>
    </reaction>
    <physiologicalReaction direction="left-to-right" evidence="1">
        <dbReference type="Rhea" id="RHEA:21257"/>
    </physiologicalReaction>
</comment>
<comment type="pathway">
    <text evidence="1">Metabolic intermediate biosynthesis; chorismate biosynthesis; chorismate from D-erythrose 4-phosphate and phosphoenolpyruvate: step 6/7.</text>
</comment>
<comment type="subunit">
    <text evidence="1">Monomer.</text>
</comment>
<comment type="subcellular location">
    <subcellularLocation>
        <location evidence="1">Cytoplasm</location>
    </subcellularLocation>
</comment>
<comment type="similarity">
    <text evidence="1">Belongs to the EPSP synthase family.</text>
</comment>
<accession>Q4QL19</accession>
<evidence type="ECO:0000255" key="1">
    <source>
        <dbReference type="HAMAP-Rule" id="MF_00210"/>
    </source>
</evidence>
<sequence>MEKITLAPISAVEGTINLPGSKSLSNRALLLAALAKGTTKVTNLLDSDDIRHMLNALKALGVRYQLSDDKTICEVEGLGGTFNIQDNLSLFLGNAGTAMRPLTAALCLKGKTESEIILTGEPRMKERPILHLVDALRQAGADIRYLENEGYPPLAIRNKGIKGGKVKIDGSISSQFLTALLMSAPLAENDTEIEIIGELVSKPYIDITLAMMRDFGVKVENHHYQKFQVKGNQSYISPNKYLVEGDASSASYFLAAGAIKGKVKVTGIGKNSIQGDRLFADVLEKMGAKITWGEDFIQAEHAELNGIDMDMNHIPDAAMTIATTALFSNGETVIRNIYNWRVKETDRLTAMATELRKVGAEVEEGEDFIHIQPLPLNQFKHANIETYNDHRIAMCFSLIALSNTPVTILDPKCTAKTFPTFFSEFEKICLRD</sequence>
<gene>
    <name evidence="1" type="primary">aroA</name>
    <name type="ordered locus">NTHI1462</name>
</gene>
<dbReference type="EC" id="2.5.1.19" evidence="1"/>
<dbReference type="EMBL" id="CP000057">
    <property type="protein sequence ID" value="AAX88278.1"/>
    <property type="molecule type" value="Genomic_DNA"/>
</dbReference>
<dbReference type="RefSeq" id="WP_011272478.1">
    <property type="nucleotide sequence ID" value="NC_007146.2"/>
</dbReference>
<dbReference type="SMR" id="Q4QL19"/>
<dbReference type="KEGG" id="hit:NTHI1462"/>
<dbReference type="HOGENOM" id="CLU_024321_0_0_6"/>
<dbReference type="UniPathway" id="UPA00053">
    <property type="reaction ID" value="UER00089"/>
</dbReference>
<dbReference type="Proteomes" id="UP000002525">
    <property type="component" value="Chromosome"/>
</dbReference>
<dbReference type="GO" id="GO:0005737">
    <property type="term" value="C:cytoplasm"/>
    <property type="evidence" value="ECO:0007669"/>
    <property type="project" value="UniProtKB-SubCell"/>
</dbReference>
<dbReference type="GO" id="GO:0003866">
    <property type="term" value="F:3-phosphoshikimate 1-carboxyvinyltransferase activity"/>
    <property type="evidence" value="ECO:0007669"/>
    <property type="project" value="UniProtKB-UniRule"/>
</dbReference>
<dbReference type="GO" id="GO:0008652">
    <property type="term" value="P:amino acid biosynthetic process"/>
    <property type="evidence" value="ECO:0007669"/>
    <property type="project" value="UniProtKB-KW"/>
</dbReference>
<dbReference type="GO" id="GO:0009073">
    <property type="term" value="P:aromatic amino acid family biosynthetic process"/>
    <property type="evidence" value="ECO:0007669"/>
    <property type="project" value="UniProtKB-KW"/>
</dbReference>
<dbReference type="GO" id="GO:0009423">
    <property type="term" value="P:chorismate biosynthetic process"/>
    <property type="evidence" value="ECO:0007669"/>
    <property type="project" value="UniProtKB-UniRule"/>
</dbReference>
<dbReference type="CDD" id="cd01556">
    <property type="entry name" value="EPSP_synthase"/>
    <property type="match status" value="1"/>
</dbReference>
<dbReference type="FunFam" id="3.65.10.10:FF:000003">
    <property type="entry name" value="3-phosphoshikimate 1-carboxyvinyltransferase"/>
    <property type="match status" value="1"/>
</dbReference>
<dbReference type="FunFam" id="3.65.10.10:FF:000004">
    <property type="entry name" value="3-phosphoshikimate 1-carboxyvinyltransferase"/>
    <property type="match status" value="1"/>
</dbReference>
<dbReference type="Gene3D" id="3.65.10.10">
    <property type="entry name" value="Enolpyruvate transferase domain"/>
    <property type="match status" value="2"/>
</dbReference>
<dbReference type="HAMAP" id="MF_00210">
    <property type="entry name" value="EPSP_synth"/>
    <property type="match status" value="1"/>
</dbReference>
<dbReference type="InterPro" id="IPR001986">
    <property type="entry name" value="Enolpyruvate_Tfrase_dom"/>
</dbReference>
<dbReference type="InterPro" id="IPR036968">
    <property type="entry name" value="Enolpyruvate_Tfrase_sf"/>
</dbReference>
<dbReference type="InterPro" id="IPR006264">
    <property type="entry name" value="EPSP_synthase"/>
</dbReference>
<dbReference type="InterPro" id="IPR023193">
    <property type="entry name" value="EPSP_synthase_CS"/>
</dbReference>
<dbReference type="InterPro" id="IPR013792">
    <property type="entry name" value="RNA3'P_cycl/enolpyr_Trfase_a/b"/>
</dbReference>
<dbReference type="NCBIfam" id="TIGR01356">
    <property type="entry name" value="aroA"/>
    <property type="match status" value="1"/>
</dbReference>
<dbReference type="PANTHER" id="PTHR21090">
    <property type="entry name" value="AROM/DEHYDROQUINATE SYNTHASE"/>
    <property type="match status" value="1"/>
</dbReference>
<dbReference type="PANTHER" id="PTHR21090:SF5">
    <property type="entry name" value="PENTAFUNCTIONAL AROM POLYPEPTIDE"/>
    <property type="match status" value="1"/>
</dbReference>
<dbReference type="Pfam" id="PF00275">
    <property type="entry name" value="EPSP_synthase"/>
    <property type="match status" value="1"/>
</dbReference>
<dbReference type="PIRSF" id="PIRSF000505">
    <property type="entry name" value="EPSPS"/>
    <property type="match status" value="1"/>
</dbReference>
<dbReference type="SUPFAM" id="SSF55205">
    <property type="entry name" value="EPT/RTPC-like"/>
    <property type="match status" value="1"/>
</dbReference>
<dbReference type="PROSITE" id="PS00104">
    <property type="entry name" value="EPSP_SYNTHASE_1"/>
    <property type="match status" value="1"/>
</dbReference>
<dbReference type="PROSITE" id="PS00885">
    <property type="entry name" value="EPSP_SYNTHASE_2"/>
    <property type="match status" value="1"/>
</dbReference>
<protein>
    <recommendedName>
        <fullName evidence="1">3-phosphoshikimate 1-carboxyvinyltransferase</fullName>
        <ecNumber evidence="1">2.5.1.19</ecNumber>
    </recommendedName>
    <alternativeName>
        <fullName evidence="1">5-enolpyruvylshikimate-3-phosphate synthase</fullName>
        <shortName evidence="1">EPSP synthase</shortName>
        <shortName evidence="1">EPSPS</shortName>
    </alternativeName>
</protein>
<proteinExistence type="inferred from homology"/>
<reference key="1">
    <citation type="journal article" date="2005" name="J. Bacteriol.">
        <title>Genomic sequence of an otitis media isolate of nontypeable Haemophilus influenzae: comparative study with H. influenzae serotype d, strain KW20.</title>
        <authorList>
            <person name="Harrison A."/>
            <person name="Dyer D.W."/>
            <person name="Gillaspy A."/>
            <person name="Ray W.C."/>
            <person name="Mungur R."/>
            <person name="Carson M.B."/>
            <person name="Zhong H."/>
            <person name="Gipson J."/>
            <person name="Gipson M."/>
            <person name="Johnson L.S."/>
            <person name="Lewis L."/>
            <person name="Bakaletz L.O."/>
            <person name="Munson R.S. Jr."/>
        </authorList>
    </citation>
    <scope>NUCLEOTIDE SEQUENCE [LARGE SCALE GENOMIC DNA]</scope>
    <source>
        <strain>86-028NP</strain>
    </source>
</reference>
<name>AROA_HAEI8</name>